<organism>
    <name type="scientific">Arabidopsis thaliana</name>
    <name type="common">Mouse-ear cress</name>
    <dbReference type="NCBI Taxonomy" id="3702"/>
    <lineage>
        <taxon>Eukaryota</taxon>
        <taxon>Viridiplantae</taxon>
        <taxon>Streptophyta</taxon>
        <taxon>Embryophyta</taxon>
        <taxon>Tracheophyta</taxon>
        <taxon>Spermatophyta</taxon>
        <taxon>Magnoliopsida</taxon>
        <taxon>eudicotyledons</taxon>
        <taxon>Gunneridae</taxon>
        <taxon>Pentapetalae</taxon>
        <taxon>rosids</taxon>
        <taxon>malvids</taxon>
        <taxon>Brassicales</taxon>
        <taxon>Brassicaceae</taxon>
        <taxon>Camelineae</taxon>
        <taxon>Arabidopsis</taxon>
    </lineage>
</organism>
<protein>
    <recommendedName>
        <fullName>PHD finger protein ALFIN-LIKE 6</fullName>
        <shortName>Protein AL6</shortName>
    </recommendedName>
</protein>
<comment type="function">
    <text evidence="1">Histone-binding component that specifically recognizes H3 tails trimethylated on 'Lys-4' (H3K4me3), which mark transcription start sites of virtually all active genes.</text>
</comment>
<comment type="subunit">
    <text evidence="1">Interacts with H3K4me3 and to a lesser extent with H3K4me2.</text>
</comment>
<comment type="interaction">
    <interactant intactId="EBI-15223069">
        <id>Q8S8M9-2</id>
    </interactant>
    <interactant intactId="EBI-4457957">
        <id>Q8GXR6</id>
        <label>At3g58630/F14P22_220</label>
    </interactant>
    <organismsDiffer>false</organismsDiffer>
    <experiments>3</experiments>
</comment>
<comment type="subcellular location">
    <subcellularLocation>
        <location evidence="4">Nucleus</location>
    </subcellularLocation>
</comment>
<comment type="alternative products">
    <event type="alternative splicing"/>
    <isoform>
        <id>Q8S8M9-1</id>
        <name>1</name>
        <sequence type="displayed"/>
    </isoform>
    <isoform>
        <id>Q8S8M9-2</id>
        <name>2</name>
        <sequence type="described" ref="VSP_041817"/>
    </isoform>
</comment>
<comment type="tissue specificity">
    <text evidence="4">Ubiquitously expressed.</text>
</comment>
<comment type="domain">
    <text evidence="1">The PHD-type zinc finger mediates the binding to H3K4me3.</text>
</comment>
<comment type="miscellaneous">
    <molecule>Isoform 2</molecule>
    <text evidence="5">May be due to a competing acceptor splice site.</text>
</comment>
<comment type="similarity">
    <text evidence="5">Belongs to the Alfin family.</text>
</comment>
<name>ALFL6_ARATH</name>
<reference key="1">
    <citation type="journal article" date="1999" name="Nature">
        <title>Sequence and analysis of chromosome 2 of the plant Arabidopsis thaliana.</title>
        <authorList>
            <person name="Lin X."/>
            <person name="Kaul S."/>
            <person name="Rounsley S.D."/>
            <person name="Shea T.P."/>
            <person name="Benito M.-I."/>
            <person name="Town C.D."/>
            <person name="Fujii C.Y."/>
            <person name="Mason T.M."/>
            <person name="Bowman C.L."/>
            <person name="Barnstead M.E."/>
            <person name="Feldblyum T.V."/>
            <person name="Buell C.R."/>
            <person name="Ketchum K.A."/>
            <person name="Lee J.J."/>
            <person name="Ronning C.M."/>
            <person name="Koo H.L."/>
            <person name="Moffat K.S."/>
            <person name="Cronin L.A."/>
            <person name="Shen M."/>
            <person name="Pai G."/>
            <person name="Van Aken S."/>
            <person name="Umayam L."/>
            <person name="Tallon L.J."/>
            <person name="Gill J.E."/>
            <person name="Adams M.D."/>
            <person name="Carrera A.J."/>
            <person name="Creasy T.H."/>
            <person name="Goodman H.M."/>
            <person name="Somerville C.R."/>
            <person name="Copenhaver G.P."/>
            <person name="Preuss D."/>
            <person name="Nierman W.C."/>
            <person name="White O."/>
            <person name="Eisen J.A."/>
            <person name="Salzberg S.L."/>
            <person name="Fraser C.M."/>
            <person name="Venter J.C."/>
        </authorList>
    </citation>
    <scope>NUCLEOTIDE SEQUENCE [LARGE SCALE GENOMIC DNA]</scope>
    <source>
        <strain>cv. Columbia</strain>
    </source>
</reference>
<reference key="2">
    <citation type="journal article" date="2017" name="Plant J.">
        <title>Araport11: a complete reannotation of the Arabidopsis thaliana reference genome.</title>
        <authorList>
            <person name="Cheng C.Y."/>
            <person name="Krishnakumar V."/>
            <person name="Chan A.P."/>
            <person name="Thibaud-Nissen F."/>
            <person name="Schobel S."/>
            <person name="Town C.D."/>
        </authorList>
    </citation>
    <scope>GENOME REANNOTATION</scope>
    <source>
        <strain>cv. Columbia</strain>
    </source>
</reference>
<reference key="3">
    <citation type="journal article" date="2003" name="Science">
        <title>Empirical analysis of transcriptional activity in the Arabidopsis genome.</title>
        <authorList>
            <person name="Yamada K."/>
            <person name="Lim J."/>
            <person name="Dale J.M."/>
            <person name="Chen H."/>
            <person name="Shinn P."/>
            <person name="Palm C.J."/>
            <person name="Southwick A.M."/>
            <person name="Wu H.C."/>
            <person name="Kim C.J."/>
            <person name="Nguyen M."/>
            <person name="Pham P.K."/>
            <person name="Cheuk R.F."/>
            <person name="Karlin-Newmann G."/>
            <person name="Liu S.X."/>
            <person name="Lam B."/>
            <person name="Sakano H."/>
            <person name="Wu T."/>
            <person name="Yu G."/>
            <person name="Miranda M."/>
            <person name="Quach H.L."/>
            <person name="Tripp M."/>
            <person name="Chang C.H."/>
            <person name="Lee J.M."/>
            <person name="Toriumi M.J."/>
            <person name="Chan M.M."/>
            <person name="Tang C.C."/>
            <person name="Onodera C.S."/>
            <person name="Deng J.M."/>
            <person name="Akiyama K."/>
            <person name="Ansari Y."/>
            <person name="Arakawa T."/>
            <person name="Banh J."/>
            <person name="Banno F."/>
            <person name="Bowser L."/>
            <person name="Brooks S.Y."/>
            <person name="Carninci P."/>
            <person name="Chao Q."/>
            <person name="Choy N."/>
            <person name="Enju A."/>
            <person name="Goldsmith A.D."/>
            <person name="Gurjal M."/>
            <person name="Hansen N.F."/>
            <person name="Hayashizaki Y."/>
            <person name="Johnson-Hopson C."/>
            <person name="Hsuan V.W."/>
            <person name="Iida K."/>
            <person name="Karnes M."/>
            <person name="Khan S."/>
            <person name="Koesema E."/>
            <person name="Ishida J."/>
            <person name="Jiang P.X."/>
            <person name="Jones T."/>
            <person name="Kawai J."/>
            <person name="Kamiya A."/>
            <person name="Meyers C."/>
            <person name="Nakajima M."/>
            <person name="Narusaka M."/>
            <person name="Seki M."/>
            <person name="Sakurai T."/>
            <person name="Satou M."/>
            <person name="Tamse R."/>
            <person name="Vaysberg M."/>
            <person name="Wallender E.K."/>
            <person name="Wong C."/>
            <person name="Yamamura Y."/>
            <person name="Yuan S."/>
            <person name="Shinozaki K."/>
            <person name="Davis R.W."/>
            <person name="Theologis A."/>
            <person name="Ecker J.R."/>
        </authorList>
    </citation>
    <scope>NUCLEOTIDE SEQUENCE [LARGE SCALE MRNA] (ISOFORM 1)</scope>
    <source>
        <strain>cv. Columbia</strain>
    </source>
</reference>
<reference key="4">
    <citation type="submission" date="2002-03" db="EMBL/GenBank/DDBJ databases">
        <title>Full-length cDNA from Arabidopsis thaliana.</title>
        <authorList>
            <person name="Brover V.V."/>
            <person name="Troukhan M.E."/>
            <person name="Alexandrov N.A."/>
            <person name="Lu Y.-P."/>
            <person name="Flavell R.B."/>
            <person name="Feldmann K.A."/>
        </authorList>
    </citation>
    <scope>NUCLEOTIDE SEQUENCE [LARGE SCALE MRNA] (ISOFORM 1)</scope>
</reference>
<reference key="5">
    <citation type="journal article" date="2009" name="Plant J.">
        <title>Arabidopsis ING and Alfin1-like protein families localize to the nucleus and bind to H3K4me3/2 via plant homeodomain fingers.</title>
        <authorList>
            <person name="Lee W.Y."/>
            <person name="Lee D."/>
            <person name="Chung W.I."/>
            <person name="Kwon C.S."/>
        </authorList>
    </citation>
    <scope>GENE FAMILY</scope>
    <scope>SUBCELLULAR LOCATION</scope>
    <scope>TISSUE SPECIFICITY</scope>
</reference>
<accession>Q8S8M9</accession>
<accession>F4IQE0</accession>
<accession>Q8LAH0</accession>
<dbReference type="EMBL" id="AC005312">
    <property type="protein sequence ID" value="AAM15031.1"/>
    <property type="molecule type" value="Genomic_DNA"/>
</dbReference>
<dbReference type="EMBL" id="CP002685">
    <property type="protein sequence ID" value="AEC05583.1"/>
    <property type="molecule type" value="Genomic_DNA"/>
</dbReference>
<dbReference type="EMBL" id="CP002685">
    <property type="protein sequence ID" value="AEC05584.1"/>
    <property type="molecule type" value="Genomic_DNA"/>
</dbReference>
<dbReference type="EMBL" id="BT003905">
    <property type="protein sequence ID" value="AAO41953.1"/>
    <property type="molecule type" value="mRNA"/>
</dbReference>
<dbReference type="EMBL" id="BT005004">
    <property type="protein sequence ID" value="AAO50537.1"/>
    <property type="molecule type" value="mRNA"/>
</dbReference>
<dbReference type="EMBL" id="AY087820">
    <property type="protein sequence ID" value="AAM65374.1"/>
    <property type="molecule type" value="mRNA"/>
</dbReference>
<dbReference type="PIR" id="A84437">
    <property type="entry name" value="A84437"/>
</dbReference>
<dbReference type="PIR" id="T00616">
    <property type="entry name" value="T00616"/>
</dbReference>
<dbReference type="RefSeq" id="NP_001189502.1">
    <molecule id="Q8S8M9-2"/>
    <property type="nucleotide sequence ID" value="NM_001202573.2"/>
</dbReference>
<dbReference type="RefSeq" id="NP_178351.1">
    <molecule id="Q8S8M9-1"/>
    <property type="nucleotide sequence ID" value="NM_126302.3"/>
</dbReference>
<dbReference type="SMR" id="Q8S8M9"/>
<dbReference type="BioGRID" id="179">
    <property type="interactions" value="12"/>
</dbReference>
<dbReference type="FunCoup" id="Q8S8M9">
    <property type="interactions" value="1051"/>
</dbReference>
<dbReference type="IntAct" id="Q8S8M9">
    <property type="interactions" value="3"/>
</dbReference>
<dbReference type="STRING" id="3702.Q8S8M9"/>
<dbReference type="iPTMnet" id="Q8S8M9"/>
<dbReference type="PaxDb" id="3702-AT2G02470.1"/>
<dbReference type="ProteomicsDB" id="245068">
    <molecule id="Q8S8M9-1"/>
</dbReference>
<dbReference type="EnsemblPlants" id="AT2G02470.1">
    <molecule id="Q8S8M9-1"/>
    <property type="protein sequence ID" value="AT2G02470.1"/>
    <property type="gene ID" value="AT2G02470"/>
</dbReference>
<dbReference type="EnsemblPlants" id="AT2G02470.2">
    <molecule id="Q8S8M9-2"/>
    <property type="protein sequence ID" value="AT2G02470.2"/>
    <property type="gene ID" value="AT2G02470"/>
</dbReference>
<dbReference type="GeneID" id="814776"/>
<dbReference type="Gramene" id="AT2G02470.1">
    <molecule id="Q8S8M9-1"/>
    <property type="protein sequence ID" value="AT2G02470.1"/>
    <property type="gene ID" value="AT2G02470"/>
</dbReference>
<dbReference type="Gramene" id="AT2G02470.2">
    <molecule id="Q8S8M9-2"/>
    <property type="protein sequence ID" value="AT2G02470.2"/>
    <property type="gene ID" value="AT2G02470"/>
</dbReference>
<dbReference type="KEGG" id="ath:AT2G02470"/>
<dbReference type="Araport" id="AT2G02470"/>
<dbReference type="TAIR" id="AT2G02470">
    <property type="gene designation" value="AL6"/>
</dbReference>
<dbReference type="eggNOG" id="KOG1632">
    <property type="taxonomic scope" value="Eukaryota"/>
</dbReference>
<dbReference type="InParanoid" id="Q8S8M9"/>
<dbReference type="OMA" id="PSKMVKM"/>
<dbReference type="PhylomeDB" id="Q8S8M9"/>
<dbReference type="CD-CODE" id="4299E36E">
    <property type="entry name" value="Nucleolus"/>
</dbReference>
<dbReference type="PRO" id="PR:Q8S8M9"/>
<dbReference type="Proteomes" id="UP000006548">
    <property type="component" value="Chromosome 2"/>
</dbReference>
<dbReference type="ExpressionAtlas" id="Q8S8M9">
    <property type="expression patterns" value="baseline and differential"/>
</dbReference>
<dbReference type="GO" id="GO:0005634">
    <property type="term" value="C:nucleus"/>
    <property type="evidence" value="ECO:0000314"/>
    <property type="project" value="TAIR"/>
</dbReference>
<dbReference type="GO" id="GO:0042393">
    <property type="term" value="F:histone binding"/>
    <property type="evidence" value="ECO:0007669"/>
    <property type="project" value="InterPro"/>
</dbReference>
<dbReference type="GO" id="GO:0000976">
    <property type="term" value="F:transcription cis-regulatory region binding"/>
    <property type="evidence" value="ECO:0000353"/>
    <property type="project" value="TAIR"/>
</dbReference>
<dbReference type="GO" id="GO:0008270">
    <property type="term" value="F:zinc ion binding"/>
    <property type="evidence" value="ECO:0007669"/>
    <property type="project" value="UniProtKB-KW"/>
</dbReference>
<dbReference type="GO" id="GO:0016036">
    <property type="term" value="P:cellular response to phosphate starvation"/>
    <property type="evidence" value="ECO:0000315"/>
    <property type="project" value="TAIR"/>
</dbReference>
<dbReference type="GO" id="GO:0006325">
    <property type="term" value="P:chromatin organization"/>
    <property type="evidence" value="ECO:0007669"/>
    <property type="project" value="UniProtKB-KW"/>
</dbReference>
<dbReference type="GO" id="GO:0006355">
    <property type="term" value="P:regulation of DNA-templated transcription"/>
    <property type="evidence" value="ECO:0007669"/>
    <property type="project" value="InterPro"/>
</dbReference>
<dbReference type="GO" id="GO:0048767">
    <property type="term" value="P:root hair elongation"/>
    <property type="evidence" value="ECO:0000315"/>
    <property type="project" value="TAIR"/>
</dbReference>
<dbReference type="CDD" id="cd15613">
    <property type="entry name" value="PHD_AL_plant"/>
    <property type="match status" value="1"/>
</dbReference>
<dbReference type="FunFam" id="3.30.40.10:FF:000306">
    <property type="entry name" value="PHD finger alfin-like protein"/>
    <property type="match status" value="1"/>
</dbReference>
<dbReference type="Gene3D" id="3.30.40.10">
    <property type="entry name" value="Zinc/RING finger domain, C3HC4 (zinc finger)"/>
    <property type="match status" value="1"/>
</dbReference>
<dbReference type="InterPro" id="IPR045104">
    <property type="entry name" value="Alfin"/>
</dbReference>
<dbReference type="InterPro" id="IPR021998">
    <property type="entry name" value="Alfin_N"/>
</dbReference>
<dbReference type="InterPro" id="IPR044104">
    <property type="entry name" value="PHD_AL_plant"/>
</dbReference>
<dbReference type="InterPro" id="IPR019786">
    <property type="entry name" value="Zinc_finger_PHD-type_CS"/>
</dbReference>
<dbReference type="InterPro" id="IPR011011">
    <property type="entry name" value="Znf_FYVE_PHD"/>
</dbReference>
<dbReference type="InterPro" id="IPR001965">
    <property type="entry name" value="Znf_PHD"/>
</dbReference>
<dbReference type="InterPro" id="IPR019787">
    <property type="entry name" value="Znf_PHD-finger"/>
</dbReference>
<dbReference type="InterPro" id="IPR013083">
    <property type="entry name" value="Znf_RING/FYVE/PHD"/>
</dbReference>
<dbReference type="PANTHER" id="PTHR12321">
    <property type="entry name" value="CPG BINDING PROTEIN"/>
    <property type="match status" value="1"/>
</dbReference>
<dbReference type="PANTHER" id="PTHR12321:SF60">
    <property type="entry name" value="PHD FINGER PROTEIN ALFIN-LIKE 6"/>
    <property type="match status" value="1"/>
</dbReference>
<dbReference type="Pfam" id="PF12165">
    <property type="entry name" value="Alfin"/>
    <property type="match status" value="1"/>
</dbReference>
<dbReference type="Pfam" id="PF00628">
    <property type="entry name" value="PHD"/>
    <property type="match status" value="1"/>
</dbReference>
<dbReference type="SMART" id="SM00249">
    <property type="entry name" value="PHD"/>
    <property type="match status" value="1"/>
</dbReference>
<dbReference type="SUPFAM" id="SSF57903">
    <property type="entry name" value="FYVE/PHD zinc finger"/>
    <property type="match status" value="1"/>
</dbReference>
<dbReference type="PROSITE" id="PS01359">
    <property type="entry name" value="ZF_PHD_1"/>
    <property type="match status" value="1"/>
</dbReference>
<dbReference type="PROSITE" id="PS50016">
    <property type="entry name" value="ZF_PHD_2"/>
    <property type="match status" value="1"/>
</dbReference>
<keyword id="KW-0025">Alternative splicing</keyword>
<keyword id="KW-0156">Chromatin regulator</keyword>
<keyword id="KW-0479">Metal-binding</keyword>
<keyword id="KW-0539">Nucleus</keyword>
<keyword id="KW-1185">Reference proteome</keyword>
<keyword id="KW-0804">Transcription</keyword>
<keyword id="KW-0805">Transcription regulation</keyword>
<keyword id="KW-0862">Zinc</keyword>
<keyword id="KW-0863">Zinc-finger</keyword>
<evidence type="ECO:0000250" key="1"/>
<evidence type="ECO:0000255" key="2">
    <source>
        <dbReference type="PROSITE-ProRule" id="PRU00146"/>
    </source>
</evidence>
<evidence type="ECO:0000256" key="3">
    <source>
        <dbReference type="SAM" id="MobiDB-lite"/>
    </source>
</evidence>
<evidence type="ECO:0000269" key="4">
    <source>
    </source>
</evidence>
<evidence type="ECO:0000305" key="5"/>
<gene>
    <name type="primary">AL6</name>
    <name type="ordered locus">At2g02470</name>
    <name type="ORF">T16F16.26</name>
</gene>
<feature type="chain" id="PRO_0000412933" description="PHD finger protein ALFIN-LIKE 6">
    <location>
        <begin position="1"/>
        <end position="256"/>
    </location>
</feature>
<feature type="zinc finger region" description="PHD-type" evidence="2">
    <location>
        <begin position="200"/>
        <end position="252"/>
    </location>
</feature>
<feature type="region of interest" description="Disordered" evidence="3">
    <location>
        <begin position="144"/>
        <end position="200"/>
    </location>
</feature>
<feature type="compositionally biased region" description="Low complexity" evidence="3">
    <location>
        <begin position="146"/>
        <end position="163"/>
    </location>
</feature>
<feature type="compositionally biased region" description="Acidic residues" evidence="3">
    <location>
        <begin position="182"/>
        <end position="199"/>
    </location>
</feature>
<feature type="site" description="Histone H3K4me3 binding" evidence="1">
    <location>
        <position position="210"/>
    </location>
</feature>
<feature type="site" description="Histone H3K4me3 binding" evidence="1">
    <location>
        <position position="216"/>
    </location>
</feature>
<feature type="site" description="Histone H3K4me3 binding" evidence="1">
    <location>
        <position position="220"/>
    </location>
</feature>
<feature type="site" description="Histone H3K4me3 binding" evidence="1">
    <location>
        <position position="225"/>
    </location>
</feature>
<feature type="splice variant" id="VSP_041817" description="In isoform 2." evidence="5">
    <location>
        <begin position="162"/>
        <end position="170"/>
    </location>
</feature>
<feature type="sequence conflict" description="In Ref. 4; AAM65374." evidence="5" ref="4">
    <original>S</original>
    <variation>T</variation>
    <location>
        <position position="170"/>
    </location>
</feature>
<proteinExistence type="evidence at protein level"/>
<sequence length="256" mass="28847">MEGITHPIPRTVEEVFSDFRGRRAGLIKALTNDMVKFYQTCDPEKENLCLYGLPNETWEVNLPVEEVPPELPEPALGINFARDGMQEKDWVSLVAVHSDSWLLSVAFYFGARFGFGKNERKRLFQMINELPTIFEVVSGNAKQSKDLSVNNNNSKSKPSGVKSRQSESLSKVAKMSSPPPKEEEEEEDESEDESEDDEQGAVCGACGDNYGTDEFWICCDACEKWFHGKCVKITPAKAEHIKHYKCPTCSNKRARP</sequence>